<keyword id="KW-0328">Glycosyltransferase</keyword>
<keyword id="KW-1185">Reference proteome</keyword>
<keyword id="KW-0808">Transferase</keyword>
<proteinExistence type="inferred from homology"/>
<accession>P9WMY0</accession>
<accession>L0T6Z8</accession>
<accession>O06405</accession>
<accession>O32851</accession>
<accession>P0A597</accession>
<dbReference type="EC" id="2.4.-.-"/>
<dbReference type="EMBL" id="AE000516">
    <property type="protein sequence ID" value="AAK44786.1"/>
    <property type="molecule type" value="Genomic_DNA"/>
</dbReference>
<dbReference type="PIR" id="F70546">
    <property type="entry name" value="F70546"/>
</dbReference>
<dbReference type="RefSeq" id="WP_003898499.1">
    <property type="nucleotide sequence ID" value="NZ_KK341227.1"/>
</dbReference>
<dbReference type="SMR" id="P9WMY0"/>
<dbReference type="CAZy" id="GT2">
    <property type="family name" value="Glycosyltransferase Family 2"/>
</dbReference>
<dbReference type="KEGG" id="mtc:MT0564"/>
<dbReference type="HOGENOM" id="CLU_033536_7_5_11"/>
<dbReference type="Proteomes" id="UP000001020">
    <property type="component" value="Chromosome"/>
</dbReference>
<dbReference type="GO" id="GO:0016757">
    <property type="term" value="F:glycosyltransferase activity"/>
    <property type="evidence" value="ECO:0007669"/>
    <property type="project" value="UniProtKB-KW"/>
</dbReference>
<dbReference type="CDD" id="cd04179">
    <property type="entry name" value="DPM_DPG-synthase_like"/>
    <property type="match status" value="1"/>
</dbReference>
<dbReference type="Gene3D" id="3.90.550.10">
    <property type="entry name" value="Spore Coat Polysaccharide Biosynthesis Protein SpsA, Chain A"/>
    <property type="match status" value="1"/>
</dbReference>
<dbReference type="InterPro" id="IPR001173">
    <property type="entry name" value="Glyco_trans_2-like"/>
</dbReference>
<dbReference type="InterPro" id="IPR050256">
    <property type="entry name" value="Glycosyltransferase_2"/>
</dbReference>
<dbReference type="InterPro" id="IPR029044">
    <property type="entry name" value="Nucleotide-diphossugar_trans"/>
</dbReference>
<dbReference type="PANTHER" id="PTHR48090:SF7">
    <property type="entry name" value="RFBJ PROTEIN"/>
    <property type="match status" value="1"/>
</dbReference>
<dbReference type="PANTHER" id="PTHR48090">
    <property type="entry name" value="UNDECAPRENYL-PHOSPHATE 4-DEOXY-4-FORMAMIDO-L-ARABINOSE TRANSFERASE-RELATED"/>
    <property type="match status" value="1"/>
</dbReference>
<dbReference type="Pfam" id="PF00535">
    <property type="entry name" value="Glycos_transf_2"/>
    <property type="match status" value="1"/>
</dbReference>
<dbReference type="SUPFAM" id="SSF53448">
    <property type="entry name" value="Nucleotide-diphospho-sugar transferases"/>
    <property type="match status" value="1"/>
</dbReference>
<evidence type="ECO:0000305" key="1"/>
<gene>
    <name type="ordered locus">MT0564</name>
</gene>
<sequence length="218" mass="23117">MAGDAVTVVLPCLNEEESLPAVLAAIPAGYRALVVDNNSTDDTATVAARHGAQVVVEPRPGYGSAVHAGVLAATTPIVAVIDADGSMDAGDLPKLVAELDKGADLVTGRRRPVAGLHWPWVARVGTVVMSWRLRTRHRLPVHDIAPMRVARREALLDLGVVDRRSGYPLELLVRAAAAGWRVVELDVSYGPRTGGKSKVSGSLRGSIIAILDFWKVIS</sequence>
<comment type="similarity">
    <text evidence="1">Belongs to the glycosyltransferase 2 family.</text>
</comment>
<name>Y539_MYCTO</name>
<feature type="chain" id="PRO_0000427223" description="Uncharacterized glycosyltransferase MT0564">
    <location>
        <begin position="1"/>
        <end position="218"/>
    </location>
</feature>
<organism>
    <name type="scientific">Mycobacterium tuberculosis (strain CDC 1551 / Oshkosh)</name>
    <dbReference type="NCBI Taxonomy" id="83331"/>
    <lineage>
        <taxon>Bacteria</taxon>
        <taxon>Bacillati</taxon>
        <taxon>Actinomycetota</taxon>
        <taxon>Actinomycetes</taxon>
        <taxon>Mycobacteriales</taxon>
        <taxon>Mycobacteriaceae</taxon>
        <taxon>Mycobacterium</taxon>
        <taxon>Mycobacterium tuberculosis complex</taxon>
    </lineage>
</organism>
<reference key="1">
    <citation type="journal article" date="2002" name="J. Bacteriol.">
        <title>Whole-genome comparison of Mycobacterium tuberculosis clinical and laboratory strains.</title>
        <authorList>
            <person name="Fleischmann R.D."/>
            <person name="Alland D."/>
            <person name="Eisen J.A."/>
            <person name="Carpenter L."/>
            <person name="White O."/>
            <person name="Peterson J.D."/>
            <person name="DeBoy R.T."/>
            <person name="Dodson R.J."/>
            <person name="Gwinn M.L."/>
            <person name="Haft D.H."/>
            <person name="Hickey E.K."/>
            <person name="Kolonay J.F."/>
            <person name="Nelson W.C."/>
            <person name="Umayam L.A."/>
            <person name="Ermolaeva M.D."/>
            <person name="Salzberg S.L."/>
            <person name="Delcher A."/>
            <person name="Utterback T.R."/>
            <person name="Weidman J.F."/>
            <person name="Khouri H.M."/>
            <person name="Gill J."/>
            <person name="Mikula A."/>
            <person name="Bishai W."/>
            <person name="Jacobs W.R. Jr."/>
            <person name="Venter J.C."/>
            <person name="Fraser C.M."/>
        </authorList>
    </citation>
    <scope>NUCLEOTIDE SEQUENCE [LARGE SCALE GENOMIC DNA]</scope>
    <source>
        <strain>CDC 1551 / Oshkosh</strain>
    </source>
</reference>
<protein>
    <recommendedName>
        <fullName>Uncharacterized glycosyltransferase MT0564</fullName>
        <ecNumber>2.4.-.-</ecNumber>
    </recommendedName>
</protein>